<accession>O54420</accession>
<organism>
    <name type="scientific">Actinobacillus pleuropneumoniae</name>
    <name type="common">Haemophilus pleuropneumoniae</name>
    <dbReference type="NCBI Taxonomy" id="715"/>
    <lineage>
        <taxon>Bacteria</taxon>
        <taxon>Pseudomonadati</taxon>
        <taxon>Pseudomonadota</taxon>
        <taxon>Gammaproteobacteria</taxon>
        <taxon>Pasteurellales</taxon>
        <taxon>Pasteurellaceae</taxon>
        <taxon>Actinobacillus</taxon>
    </lineage>
</organism>
<evidence type="ECO:0000255" key="1">
    <source>
        <dbReference type="HAMAP-Rule" id="MF_01953"/>
    </source>
</evidence>
<protein>
    <recommendedName>
        <fullName evidence="1">Urease subunit alpha</fullName>
        <ecNumber evidence="1">3.5.1.5</ecNumber>
    </recommendedName>
    <alternativeName>
        <fullName evidence="1">Urea amidohydrolase subunit alpha</fullName>
    </alternativeName>
</protein>
<reference key="1">
    <citation type="journal article" date="1997" name="Infect. Immun.">
        <title>Genetic and biochemical analyses of Actinobacillus pleuropneumoniae urease.</title>
        <authorList>
            <person name="Bosse J.T."/>
            <person name="Macinnes J.I."/>
        </authorList>
    </citation>
    <scope>NUCLEOTIDE SEQUENCE [GENOMIC DNA]</scope>
    <source>
        <strain>CM5 / Serotype 1</strain>
    </source>
</reference>
<keyword id="KW-0963">Cytoplasm</keyword>
<keyword id="KW-0378">Hydrolase</keyword>
<keyword id="KW-0479">Metal-binding</keyword>
<keyword id="KW-0533">Nickel</keyword>
<comment type="catalytic activity">
    <reaction evidence="1">
        <text>urea + 2 H2O + H(+) = hydrogencarbonate + 2 NH4(+)</text>
        <dbReference type="Rhea" id="RHEA:20557"/>
        <dbReference type="ChEBI" id="CHEBI:15377"/>
        <dbReference type="ChEBI" id="CHEBI:15378"/>
        <dbReference type="ChEBI" id="CHEBI:16199"/>
        <dbReference type="ChEBI" id="CHEBI:17544"/>
        <dbReference type="ChEBI" id="CHEBI:28938"/>
        <dbReference type="EC" id="3.5.1.5"/>
    </reaction>
</comment>
<comment type="cofactor">
    <cofactor evidence="1">
        <name>Ni cation</name>
        <dbReference type="ChEBI" id="CHEBI:25516"/>
    </cofactor>
    <text evidence="1">Binds 2 nickel ions per subunit.</text>
</comment>
<comment type="pathway">
    <text evidence="1">Nitrogen metabolism; urea degradation; CO(2) and NH(3) from urea (urease route): step 1/1.</text>
</comment>
<comment type="subunit">
    <text evidence="1">Heterotrimer of UreA (gamma), UreB (beta) and UreC (alpha) subunits. Three heterotrimers associate to form the active enzyme.</text>
</comment>
<comment type="subcellular location">
    <subcellularLocation>
        <location evidence="1">Cytoplasm</location>
    </subcellularLocation>
</comment>
<comment type="PTM">
    <text evidence="1">Carboxylation allows a single lysine to coordinate two nickel ions.</text>
</comment>
<comment type="similarity">
    <text evidence="1">Belongs to the metallo-dependent hydrolases superfamily. Urease alpha subunit family.</text>
</comment>
<dbReference type="EC" id="3.5.1.5" evidence="1"/>
<dbReference type="EMBL" id="U89957">
    <property type="protein sequence ID" value="AAC00060.1"/>
    <property type="molecule type" value="Genomic_DNA"/>
</dbReference>
<dbReference type="SMR" id="O54420"/>
<dbReference type="MEROPS" id="M38.982"/>
<dbReference type="UniPathway" id="UPA00258">
    <property type="reaction ID" value="UER00370"/>
</dbReference>
<dbReference type="GO" id="GO:0005737">
    <property type="term" value="C:cytoplasm"/>
    <property type="evidence" value="ECO:0007669"/>
    <property type="project" value="UniProtKB-SubCell"/>
</dbReference>
<dbReference type="GO" id="GO:0016151">
    <property type="term" value="F:nickel cation binding"/>
    <property type="evidence" value="ECO:0007669"/>
    <property type="project" value="UniProtKB-UniRule"/>
</dbReference>
<dbReference type="GO" id="GO:0009039">
    <property type="term" value="F:urease activity"/>
    <property type="evidence" value="ECO:0007669"/>
    <property type="project" value="UniProtKB-UniRule"/>
</dbReference>
<dbReference type="GO" id="GO:0043419">
    <property type="term" value="P:urea catabolic process"/>
    <property type="evidence" value="ECO:0007669"/>
    <property type="project" value="UniProtKB-UniRule"/>
</dbReference>
<dbReference type="CDD" id="cd00375">
    <property type="entry name" value="Urease_alpha"/>
    <property type="match status" value="1"/>
</dbReference>
<dbReference type="Gene3D" id="3.20.20.140">
    <property type="entry name" value="Metal-dependent hydrolases"/>
    <property type="match status" value="1"/>
</dbReference>
<dbReference type="Gene3D" id="2.30.40.10">
    <property type="entry name" value="Urease, subunit C, domain 1"/>
    <property type="match status" value="1"/>
</dbReference>
<dbReference type="HAMAP" id="MF_01953">
    <property type="entry name" value="Urease_alpha"/>
    <property type="match status" value="1"/>
</dbReference>
<dbReference type="InterPro" id="IPR006680">
    <property type="entry name" value="Amidohydro-rel"/>
</dbReference>
<dbReference type="InterPro" id="IPR011059">
    <property type="entry name" value="Metal-dep_hydrolase_composite"/>
</dbReference>
<dbReference type="InterPro" id="IPR032466">
    <property type="entry name" value="Metal_Hydrolase"/>
</dbReference>
<dbReference type="InterPro" id="IPR011612">
    <property type="entry name" value="Urease_alpha_N_dom"/>
</dbReference>
<dbReference type="InterPro" id="IPR050112">
    <property type="entry name" value="Urease_alpha_subunit"/>
</dbReference>
<dbReference type="InterPro" id="IPR017950">
    <property type="entry name" value="Urease_AS"/>
</dbReference>
<dbReference type="InterPro" id="IPR005848">
    <property type="entry name" value="Urease_asu"/>
</dbReference>
<dbReference type="InterPro" id="IPR017951">
    <property type="entry name" value="Urease_asu_c"/>
</dbReference>
<dbReference type="InterPro" id="IPR029754">
    <property type="entry name" value="Urease_Ni-bd"/>
</dbReference>
<dbReference type="NCBIfam" id="NF009686">
    <property type="entry name" value="PRK13207.1"/>
    <property type="match status" value="1"/>
</dbReference>
<dbReference type="NCBIfam" id="TIGR01792">
    <property type="entry name" value="urease_alph"/>
    <property type="match status" value="1"/>
</dbReference>
<dbReference type="PANTHER" id="PTHR43440">
    <property type="entry name" value="UREASE"/>
    <property type="match status" value="1"/>
</dbReference>
<dbReference type="PANTHER" id="PTHR43440:SF1">
    <property type="entry name" value="UREASE"/>
    <property type="match status" value="1"/>
</dbReference>
<dbReference type="Pfam" id="PF01979">
    <property type="entry name" value="Amidohydro_1"/>
    <property type="match status" value="1"/>
</dbReference>
<dbReference type="Pfam" id="PF00449">
    <property type="entry name" value="Urease_alpha"/>
    <property type="match status" value="1"/>
</dbReference>
<dbReference type="PRINTS" id="PR01752">
    <property type="entry name" value="UREASE"/>
</dbReference>
<dbReference type="SUPFAM" id="SSF51338">
    <property type="entry name" value="Composite domain of metallo-dependent hydrolases"/>
    <property type="match status" value="2"/>
</dbReference>
<dbReference type="SUPFAM" id="SSF51556">
    <property type="entry name" value="Metallo-dependent hydrolases"/>
    <property type="match status" value="1"/>
</dbReference>
<dbReference type="PROSITE" id="PS01120">
    <property type="entry name" value="UREASE_1"/>
    <property type="match status" value="1"/>
</dbReference>
<dbReference type="PROSITE" id="PS00145">
    <property type="entry name" value="UREASE_2"/>
    <property type="match status" value="1"/>
</dbReference>
<dbReference type="PROSITE" id="PS51368">
    <property type="entry name" value="UREASE_3"/>
    <property type="match status" value="1"/>
</dbReference>
<proteinExistence type="inferred from homology"/>
<sequence>MALTIPRSQYVATYGPTVGDKVRLGDTDLWATIEQDFLTKGDECKFGGGKSVRDGMAQSSTATRDNPNVLDFALTNVMIIDAKLGIIKADIGIRDGRIVGIGQAGNPDTMDNVTPNMIIGASTEVHNGAHLIATAGGIDTHIHWICPQQAQHAIENGITTMIGGGSGPADGTHATTCTPGKFNIERMFQACEALPVNIGFFGKGNCSMLEPLKEQVVAGALGLKIHEDWGATPAVIDAALKVADEMDVQVAIHTDTLNESGFLEDTMKAINGRVIHTFHTEGAGGGHAPDIIKAAMYPNVLPASTNPNRPFTVNTIDEHLDMLMVCHHLDKRVPEDVAFADSRIRPETIAAEDILHDMGVFSIMSSDSQAMGRVGEVVTRTWQTADKMKAQRGALGDEGNDNFRIKRYIAKYTINPAIAHGISQYVGSLEVGKLADIVLWKPQFFGVKPEFVMKKGFISFAKMGDPNASIPTPQPVFYRPMFGANAKANTESAVYFVSQASVDANIKAQYGIQKETLAVKGCRDVGKKDLVHNNATPEITVDTERYEVRVDGEHITCEPATKVPLAQRYFLF</sequence>
<feature type="chain" id="PRO_0000067535" description="Urease subunit alpha">
    <location>
        <begin position="1"/>
        <end position="572"/>
    </location>
</feature>
<feature type="domain" description="Urease" evidence="1">
    <location>
        <begin position="136"/>
        <end position="572"/>
    </location>
</feature>
<feature type="active site" description="Proton donor" evidence="1">
    <location>
        <position position="327"/>
    </location>
</feature>
<feature type="binding site" evidence="1">
    <location>
        <position position="141"/>
    </location>
    <ligand>
        <name>Ni(2+)</name>
        <dbReference type="ChEBI" id="CHEBI:49786"/>
        <label>1</label>
    </ligand>
</feature>
<feature type="binding site" evidence="1">
    <location>
        <position position="143"/>
    </location>
    <ligand>
        <name>Ni(2+)</name>
        <dbReference type="ChEBI" id="CHEBI:49786"/>
        <label>1</label>
    </ligand>
</feature>
<feature type="binding site" description="via carbamate group" evidence="1">
    <location>
        <position position="224"/>
    </location>
    <ligand>
        <name>Ni(2+)</name>
        <dbReference type="ChEBI" id="CHEBI:49786"/>
        <label>1</label>
    </ligand>
</feature>
<feature type="binding site" description="via carbamate group" evidence="1">
    <location>
        <position position="224"/>
    </location>
    <ligand>
        <name>Ni(2+)</name>
        <dbReference type="ChEBI" id="CHEBI:49786"/>
        <label>2</label>
    </ligand>
</feature>
<feature type="binding site" evidence="1">
    <location>
        <position position="226"/>
    </location>
    <ligand>
        <name>substrate</name>
    </ligand>
</feature>
<feature type="binding site" evidence="1">
    <location>
        <position position="253"/>
    </location>
    <ligand>
        <name>Ni(2+)</name>
        <dbReference type="ChEBI" id="CHEBI:49786"/>
        <label>2</label>
    </ligand>
</feature>
<feature type="binding site" evidence="1">
    <location>
        <position position="279"/>
    </location>
    <ligand>
        <name>Ni(2+)</name>
        <dbReference type="ChEBI" id="CHEBI:49786"/>
        <label>2</label>
    </ligand>
</feature>
<feature type="binding site" evidence="1">
    <location>
        <position position="367"/>
    </location>
    <ligand>
        <name>Ni(2+)</name>
        <dbReference type="ChEBI" id="CHEBI:49786"/>
        <label>1</label>
    </ligand>
</feature>
<feature type="modified residue" description="N6-carboxylysine" evidence="1">
    <location>
        <position position="224"/>
    </location>
</feature>
<gene>
    <name evidence="1" type="primary">ureC</name>
</gene>
<name>URE1_ACTPL</name>